<protein>
    <recommendedName>
        <fullName evidence="20">Neural cell adhesion molecule 1</fullName>
        <shortName>N-CAM-1</shortName>
        <shortName>NCAM-1</shortName>
    </recommendedName>
    <cdAntigenName evidence="14">CD56</cdAntigenName>
</protein>
<proteinExistence type="evidence at protein level"/>
<organism>
    <name type="scientific">Homo sapiens</name>
    <name type="common">Human</name>
    <dbReference type="NCBI Taxonomy" id="9606"/>
    <lineage>
        <taxon>Eukaryota</taxon>
        <taxon>Metazoa</taxon>
        <taxon>Chordata</taxon>
        <taxon>Craniata</taxon>
        <taxon>Vertebrata</taxon>
        <taxon>Euteleostomi</taxon>
        <taxon>Mammalia</taxon>
        <taxon>Eutheria</taxon>
        <taxon>Euarchontoglires</taxon>
        <taxon>Primates</taxon>
        <taxon>Haplorrhini</taxon>
        <taxon>Catarrhini</taxon>
        <taxon>Hominidae</taxon>
        <taxon>Homo</taxon>
    </lineage>
</organism>
<keyword id="KW-0002">3D-structure</keyword>
<keyword id="KW-0025">Alternative splicing</keyword>
<keyword id="KW-0130">Cell adhesion</keyword>
<keyword id="KW-1003">Cell membrane</keyword>
<keyword id="KW-1015">Disulfide bond</keyword>
<keyword id="KW-0325">Glycoprotein</keyword>
<keyword id="KW-0336">GPI-anchor</keyword>
<keyword id="KW-1183">Host cell receptor for virus entry</keyword>
<keyword id="KW-0945">Host-virus interaction</keyword>
<keyword id="KW-0393">Immunoglobulin domain</keyword>
<keyword id="KW-0449">Lipoprotein</keyword>
<keyword id="KW-0472">Membrane</keyword>
<keyword id="KW-0597">Phosphoprotein</keyword>
<keyword id="KW-1267">Proteomics identification</keyword>
<keyword id="KW-0675">Receptor</keyword>
<keyword id="KW-1185">Reference proteome</keyword>
<keyword id="KW-0677">Repeat</keyword>
<keyword id="KW-0964">Secreted</keyword>
<keyword id="KW-0732">Signal</keyword>
<keyword id="KW-0812">Transmembrane</keyword>
<keyword id="KW-1133">Transmembrane helix</keyword>
<evidence type="ECO:0000250" key="1"/>
<evidence type="ECO:0000250" key="2">
    <source>
        <dbReference type="UniProtKB" id="P13590"/>
    </source>
</evidence>
<evidence type="ECO:0000250" key="3">
    <source>
        <dbReference type="UniProtKB" id="P13595"/>
    </source>
</evidence>
<evidence type="ECO:0000255" key="4"/>
<evidence type="ECO:0000255" key="5">
    <source>
        <dbReference type="PROSITE-ProRule" id="PRU00316"/>
    </source>
</evidence>
<evidence type="ECO:0000256" key="6">
    <source>
        <dbReference type="SAM" id="MobiDB-lite"/>
    </source>
</evidence>
<evidence type="ECO:0000269" key="7">
    <source>
    </source>
</evidence>
<evidence type="ECO:0000269" key="8">
    <source>
    </source>
</evidence>
<evidence type="ECO:0000269" key="9">
    <source>
    </source>
</evidence>
<evidence type="ECO:0000269" key="10">
    <source>
    </source>
</evidence>
<evidence type="ECO:0000269" key="11">
    <source>
    </source>
</evidence>
<evidence type="ECO:0000269" key="12">
    <source>
    </source>
</evidence>
<evidence type="ECO:0000303" key="13">
    <source>
    </source>
</evidence>
<evidence type="ECO:0000303" key="14">
    <source>
    </source>
</evidence>
<evidence type="ECO:0000303" key="15">
    <source>
    </source>
</evidence>
<evidence type="ECO:0000303" key="16">
    <source>
    </source>
</evidence>
<evidence type="ECO:0000303" key="17">
    <source>
    </source>
</evidence>
<evidence type="ECO:0000303" key="18">
    <source>
    </source>
</evidence>
<evidence type="ECO:0000303" key="19">
    <source ref="5"/>
</evidence>
<evidence type="ECO:0000305" key="20"/>
<evidence type="ECO:0000312" key="21">
    <source>
        <dbReference type="HGNC" id="HGNC:7656"/>
    </source>
</evidence>
<evidence type="ECO:0007829" key="22">
    <source>
        <dbReference type="PDB" id="2HAZ"/>
    </source>
</evidence>
<evidence type="ECO:0007829" key="23">
    <source>
        <dbReference type="PDB" id="2VKW"/>
    </source>
</evidence>
<evidence type="ECO:0007829" key="24">
    <source>
        <dbReference type="PDB" id="3MTR"/>
    </source>
</evidence>
<evidence type="ECO:0007829" key="25">
    <source>
        <dbReference type="PDB" id="5AEA"/>
    </source>
</evidence>
<evidence type="ECO:0007829" key="26">
    <source>
        <dbReference type="PDB" id="5LKN"/>
    </source>
</evidence>
<dbReference type="EMBL" id="X16841">
    <property type="protein sequence ID" value="CAA34739.1"/>
    <property type="molecule type" value="mRNA"/>
</dbReference>
<dbReference type="EMBL" id="U63041">
    <property type="protein sequence ID" value="AAB04558.1"/>
    <property type="molecule type" value="mRNA"/>
</dbReference>
<dbReference type="EMBL" id="S71824">
    <property type="protein sequence ID" value="AAB31836.1"/>
    <property type="molecule type" value="mRNA"/>
</dbReference>
<dbReference type="EMBL" id="AK292453">
    <property type="protein sequence ID" value="BAF85142.1"/>
    <property type="molecule type" value="mRNA"/>
</dbReference>
<dbReference type="EMBL" id="AB209443">
    <property type="protein sequence ID" value="BAD92680.1"/>
    <property type="status" value="ALT_INIT"/>
    <property type="molecule type" value="mRNA"/>
</dbReference>
<dbReference type="EMBL" id="BC014205">
    <property type="protein sequence ID" value="AAH14205.2"/>
    <property type="molecule type" value="mRNA"/>
</dbReference>
<dbReference type="EMBL" id="BC029119">
    <property type="protein sequence ID" value="AAH29119.1"/>
    <property type="molecule type" value="mRNA"/>
</dbReference>
<dbReference type="EMBL" id="BC047244">
    <property type="protein sequence ID" value="AAH47244.1"/>
    <property type="molecule type" value="mRNA"/>
</dbReference>
<dbReference type="EMBL" id="S73101">
    <property type="protein sequence ID" value="AAB20698.1"/>
    <property type="molecule type" value="mRNA"/>
</dbReference>
<dbReference type="EMBL" id="M17410">
    <property type="protein sequence ID" value="AAA59913.1"/>
    <property type="molecule type" value="mRNA"/>
</dbReference>
<dbReference type="EMBL" id="M17409">
    <property type="protein sequence ID" value="AAA59912.1"/>
    <property type="molecule type" value="mRNA"/>
</dbReference>
<dbReference type="EMBL" id="M22094">
    <property type="protein sequence ID" value="AAA59910.1"/>
    <property type="molecule type" value="mRNA"/>
</dbReference>
<dbReference type="EMBL" id="M22092">
    <property type="protein sequence ID" value="AAA59911.1"/>
    <property type="molecule type" value="Genomic_DNA"/>
</dbReference>
<dbReference type="EMBL" id="M22091">
    <property type="protein sequence ID" value="AAA59911.1"/>
    <property type="status" value="JOINED"/>
    <property type="molecule type" value="Genomic_DNA"/>
</dbReference>
<dbReference type="CCDS" id="CCDS73385.1">
    <molecule id="P13591-2"/>
</dbReference>
<dbReference type="CCDS" id="CCDS73386.1">
    <molecule id="P13591-3"/>
</dbReference>
<dbReference type="CCDS" id="CCDS73387.1">
    <molecule id="P13591-4"/>
</dbReference>
<dbReference type="CCDS" id="CCDS73388.1">
    <molecule id="P13591-1"/>
</dbReference>
<dbReference type="PIR" id="A31635">
    <property type="entry name" value="A31635"/>
</dbReference>
<dbReference type="PIR" id="I54773">
    <property type="entry name" value="I54773"/>
</dbReference>
<dbReference type="PIR" id="S07784">
    <property type="entry name" value="IJHUNG"/>
</dbReference>
<dbReference type="RefSeq" id="NP_000606.3">
    <molecule id="P13591-1"/>
    <property type="nucleotide sequence ID" value="NM_000615.7"/>
</dbReference>
<dbReference type="RefSeq" id="NP_001070150.1">
    <molecule id="P13591-3"/>
    <property type="nucleotide sequence ID" value="NM_001076682.4"/>
</dbReference>
<dbReference type="RefSeq" id="NP_001229537.1">
    <molecule id="P13591-4"/>
    <property type="nucleotide sequence ID" value="NM_001242608.2"/>
</dbReference>
<dbReference type="RefSeq" id="NP_851996.2">
    <molecule id="P13591-2"/>
    <property type="nucleotide sequence ID" value="NM_181351.5"/>
</dbReference>
<dbReference type="PDB" id="2E3V">
    <property type="method" value="X-ray"/>
    <property type="resolution" value="1.95 A"/>
    <property type="chains" value="A/B/C=510-619"/>
</dbReference>
<dbReference type="PDB" id="2HAZ">
    <property type="method" value="X-ray"/>
    <property type="resolution" value="1.70 A"/>
    <property type="chains" value="A=508-608"/>
</dbReference>
<dbReference type="PDB" id="2VKW">
    <property type="method" value="X-ray"/>
    <property type="resolution" value="2.30 A"/>
    <property type="chains" value="A/B=506-702"/>
</dbReference>
<dbReference type="PDB" id="2VKX">
    <property type="method" value="X-ray"/>
    <property type="resolution" value="2.70 A"/>
    <property type="chains" value="A/B/C/D/E/F=506-702"/>
</dbReference>
<dbReference type="PDB" id="3MTR">
    <property type="method" value="X-ray"/>
    <property type="resolution" value="1.80 A"/>
    <property type="chains" value="A/B=414-611"/>
</dbReference>
<dbReference type="PDB" id="5AEA">
    <property type="method" value="X-ray"/>
    <property type="resolution" value="1.90 A"/>
    <property type="chains" value="A/B=20-116"/>
</dbReference>
<dbReference type="PDB" id="5LKN">
    <property type="method" value="NMR"/>
    <property type="chains" value="A=611-702"/>
</dbReference>
<dbReference type="PDBsum" id="2E3V"/>
<dbReference type="PDBsum" id="2HAZ"/>
<dbReference type="PDBsum" id="2VKW"/>
<dbReference type="PDBsum" id="2VKX"/>
<dbReference type="PDBsum" id="3MTR"/>
<dbReference type="PDBsum" id="5AEA"/>
<dbReference type="PDBsum" id="5LKN"/>
<dbReference type="BMRB" id="P13591"/>
<dbReference type="SMR" id="P13591"/>
<dbReference type="BioGRID" id="110764">
    <property type="interactions" value="77"/>
</dbReference>
<dbReference type="DIP" id="DIP-59530N"/>
<dbReference type="FunCoup" id="P13591">
    <property type="interactions" value="1306"/>
</dbReference>
<dbReference type="IntAct" id="P13591">
    <property type="interactions" value="51"/>
</dbReference>
<dbReference type="MINT" id="P13591"/>
<dbReference type="STRING" id="9606.ENSP00000480132"/>
<dbReference type="ChEMBL" id="CHEMBL3712938"/>
<dbReference type="TCDB" id="8.A.23.1.49">
    <property type="family name" value="the basigin (basigin) family"/>
</dbReference>
<dbReference type="UniLectin" id="P13591"/>
<dbReference type="GlyConnect" id="1545">
    <property type="glycosylation" value="8 N-Linked glycans (1 site)"/>
</dbReference>
<dbReference type="GlyCosmos" id="P13591">
    <property type="glycosylation" value="6 sites, 10 glycans"/>
</dbReference>
<dbReference type="GlyGen" id="P13591">
    <property type="glycosylation" value="8 sites, 25 N-linked glycans (3 sites), 1 O-linked glycan (2 sites)"/>
</dbReference>
<dbReference type="iPTMnet" id="P13591"/>
<dbReference type="PhosphoSitePlus" id="P13591"/>
<dbReference type="SwissPalm" id="P13591"/>
<dbReference type="BioMuta" id="NCAM1"/>
<dbReference type="DMDM" id="205830665"/>
<dbReference type="jPOST" id="P13591"/>
<dbReference type="MassIVE" id="P13591"/>
<dbReference type="PaxDb" id="9606-ENSP00000480132"/>
<dbReference type="PeptideAtlas" id="P13591"/>
<dbReference type="ProteomicsDB" id="52931">
    <molecule id="P13591-2"/>
</dbReference>
<dbReference type="ProteomicsDB" id="52932">
    <molecule id="P13591-1"/>
</dbReference>
<dbReference type="ProteomicsDB" id="52933">
    <molecule id="P13591-3"/>
</dbReference>
<dbReference type="ProteomicsDB" id="52934">
    <molecule id="P13591-4"/>
</dbReference>
<dbReference type="ProteomicsDB" id="52935">
    <molecule id="P13591-5"/>
</dbReference>
<dbReference type="ProteomicsDB" id="52936">
    <molecule id="P13591-6"/>
</dbReference>
<dbReference type="Pumba" id="P13591"/>
<dbReference type="ABCD" id="P13591">
    <property type="antibodies" value="1 sequenced antibody"/>
</dbReference>
<dbReference type="Antibodypedia" id="4329">
    <property type="antibodies" value="3683 antibodies from 58 providers"/>
</dbReference>
<dbReference type="CPTC" id="P13591">
    <property type="antibodies" value="1 antibody"/>
</dbReference>
<dbReference type="DNASU" id="4684"/>
<dbReference type="Ensembl" id="ENST00000316851.12">
    <molecule id="P13591-2"/>
    <property type="protein sequence ID" value="ENSP00000318472.8"/>
    <property type="gene ID" value="ENSG00000149294.18"/>
</dbReference>
<dbReference type="Ensembl" id="ENST00000529356.5">
    <molecule id="P13591-6"/>
    <property type="protein sequence ID" value="ENSP00000482205.1"/>
    <property type="gene ID" value="ENSG00000149294.18"/>
</dbReference>
<dbReference type="Ensembl" id="ENST00000531044.5">
    <molecule id="P13591-1"/>
    <property type="protein sequence ID" value="ENSP00000484943.1"/>
    <property type="gene ID" value="ENSG00000149294.18"/>
</dbReference>
<dbReference type="Ensembl" id="ENST00000621128.4">
    <molecule id="P13591-4"/>
    <property type="protein sequence ID" value="ENSP00000481083.1"/>
    <property type="gene ID" value="ENSG00000149294.18"/>
</dbReference>
<dbReference type="Ensembl" id="ENST00000621850.4">
    <molecule id="P13591-3"/>
    <property type="protein sequence ID" value="ENSP00000480774.1"/>
    <property type="gene ID" value="ENSG00000149294.18"/>
</dbReference>
<dbReference type="GeneID" id="4684"/>
<dbReference type="KEGG" id="hsa:4684"/>
<dbReference type="MANE-Select" id="ENST00000316851.12">
    <property type="protein sequence ID" value="ENSP00000318472.8"/>
    <property type="RefSeq nucleotide sequence ID" value="NM_181351.5"/>
    <property type="RefSeq protein sequence ID" value="NP_851996.2"/>
</dbReference>
<dbReference type="UCSC" id="uc031yfh.2">
    <molecule id="P13591-2"/>
    <property type="organism name" value="human"/>
</dbReference>
<dbReference type="AGR" id="HGNC:7656"/>
<dbReference type="CTD" id="4684"/>
<dbReference type="DisGeNET" id="4684"/>
<dbReference type="GeneCards" id="NCAM1"/>
<dbReference type="HGNC" id="HGNC:7656">
    <property type="gene designation" value="NCAM1"/>
</dbReference>
<dbReference type="HPA" id="ENSG00000149294">
    <property type="expression patterns" value="Tissue enhanced (brain, heart muscle)"/>
</dbReference>
<dbReference type="MIM" id="116930">
    <property type="type" value="gene"/>
</dbReference>
<dbReference type="neXtProt" id="NX_P13591"/>
<dbReference type="OpenTargets" id="ENSG00000149294"/>
<dbReference type="PharmGKB" id="PA31459"/>
<dbReference type="VEuPathDB" id="HostDB:ENSG00000149294"/>
<dbReference type="eggNOG" id="KOG3510">
    <property type="taxonomic scope" value="Eukaryota"/>
</dbReference>
<dbReference type="GeneTree" id="ENSGT00940000155743"/>
<dbReference type="HOGENOM" id="CLU_068819_0_0_1"/>
<dbReference type="InParanoid" id="P13591"/>
<dbReference type="OMA" id="SEWKPEM"/>
<dbReference type="OrthoDB" id="10056271at2759"/>
<dbReference type="PAN-GO" id="P13591">
    <property type="GO annotations" value="1 GO annotation based on evolutionary models"/>
</dbReference>
<dbReference type="PhylomeDB" id="P13591"/>
<dbReference type="TreeFam" id="TF326195"/>
<dbReference type="PathwayCommons" id="P13591"/>
<dbReference type="Reactome" id="R-HSA-3000178">
    <property type="pathway name" value="ECM proteoglycans"/>
</dbReference>
<dbReference type="Reactome" id="R-HSA-375165">
    <property type="pathway name" value="NCAM signaling for neurite out-growth"/>
</dbReference>
<dbReference type="Reactome" id="R-HSA-419037">
    <property type="pathway name" value="NCAM1 interactions"/>
</dbReference>
<dbReference type="Reactome" id="R-HSA-445144">
    <property type="pathway name" value="Signal transduction by L1"/>
</dbReference>
<dbReference type="Reactome" id="R-HSA-5673001">
    <property type="pathway name" value="RAF/MAP kinase cascade"/>
</dbReference>
<dbReference type="Reactome" id="R-HSA-877300">
    <property type="pathway name" value="Interferon gamma signaling"/>
</dbReference>
<dbReference type="SignaLink" id="P13591"/>
<dbReference type="SIGNOR" id="P13591"/>
<dbReference type="BioGRID-ORCS" id="4684">
    <property type="hits" value="7 hits in 397 CRISPR screens"/>
</dbReference>
<dbReference type="CD-CODE" id="FB4E32DD">
    <property type="entry name" value="Presynaptic clusters and postsynaptic densities"/>
</dbReference>
<dbReference type="ChiTaRS" id="NCAM1">
    <property type="organism name" value="human"/>
</dbReference>
<dbReference type="EvolutionaryTrace" id="P13591"/>
<dbReference type="GeneWiki" id="Neural_cell_adhesion_molecule"/>
<dbReference type="GenomeRNAi" id="4684"/>
<dbReference type="Pharos" id="P13591">
    <property type="development level" value="Tbio"/>
</dbReference>
<dbReference type="PRO" id="PR:P13591"/>
<dbReference type="Proteomes" id="UP000005640">
    <property type="component" value="Chromosome 11"/>
</dbReference>
<dbReference type="RNAct" id="P13591">
    <property type="molecule type" value="protein"/>
</dbReference>
<dbReference type="Bgee" id="ENSG00000149294">
    <property type="expression patterns" value="Expressed in cortical plate and 198 other cell types or tissues"/>
</dbReference>
<dbReference type="ExpressionAtlas" id="P13591">
    <property type="expression patterns" value="baseline and differential"/>
</dbReference>
<dbReference type="GO" id="GO:0009986">
    <property type="term" value="C:cell surface"/>
    <property type="evidence" value="ECO:0000314"/>
    <property type="project" value="BHF-UCL"/>
</dbReference>
<dbReference type="GO" id="GO:0062023">
    <property type="term" value="C:collagen-containing extracellular matrix"/>
    <property type="evidence" value="ECO:0007005"/>
    <property type="project" value="BHF-UCL"/>
</dbReference>
<dbReference type="GO" id="GO:0005829">
    <property type="term" value="C:cytosol"/>
    <property type="evidence" value="ECO:0000314"/>
    <property type="project" value="HPA"/>
</dbReference>
<dbReference type="GO" id="GO:0009897">
    <property type="term" value="C:external side of plasma membrane"/>
    <property type="evidence" value="ECO:0000314"/>
    <property type="project" value="MGI"/>
</dbReference>
<dbReference type="GO" id="GO:0005576">
    <property type="term" value="C:extracellular region"/>
    <property type="evidence" value="ECO:0007669"/>
    <property type="project" value="UniProtKB-SubCell"/>
</dbReference>
<dbReference type="GO" id="GO:0000139">
    <property type="term" value="C:Golgi membrane"/>
    <property type="evidence" value="ECO:0000304"/>
    <property type="project" value="Reactome"/>
</dbReference>
<dbReference type="GO" id="GO:0016020">
    <property type="term" value="C:membrane"/>
    <property type="evidence" value="ECO:0007005"/>
    <property type="project" value="UniProtKB"/>
</dbReference>
<dbReference type="GO" id="GO:0043005">
    <property type="term" value="C:neuron projection"/>
    <property type="evidence" value="ECO:0000318"/>
    <property type="project" value="GO_Central"/>
</dbReference>
<dbReference type="GO" id="GO:0005886">
    <property type="term" value="C:plasma membrane"/>
    <property type="evidence" value="ECO:0000314"/>
    <property type="project" value="HPA"/>
</dbReference>
<dbReference type="GO" id="GO:0001618">
    <property type="term" value="F:virus receptor activity"/>
    <property type="evidence" value="ECO:0007669"/>
    <property type="project" value="UniProtKB-KW"/>
</dbReference>
<dbReference type="GO" id="GO:0007155">
    <property type="term" value="P:cell adhesion"/>
    <property type="evidence" value="ECO:0000303"/>
    <property type="project" value="ProtInc"/>
</dbReference>
<dbReference type="GO" id="GO:0071679">
    <property type="term" value="P:commissural neuron axon guidance"/>
    <property type="evidence" value="ECO:0000250"/>
    <property type="project" value="ARUK-UCL"/>
</dbReference>
<dbReference type="GO" id="GO:0001837">
    <property type="term" value="P:epithelial to mesenchymal transition"/>
    <property type="evidence" value="ECO:0000250"/>
    <property type="project" value="UniProtKB"/>
</dbReference>
<dbReference type="GO" id="GO:2001260">
    <property type="term" value="P:regulation of semaphorin-plexin signaling pathway"/>
    <property type="evidence" value="ECO:0000250"/>
    <property type="project" value="ARUK-UCL"/>
</dbReference>
<dbReference type="CDD" id="cd00063">
    <property type="entry name" value="FN3"/>
    <property type="match status" value="2"/>
</dbReference>
<dbReference type="CDD" id="cd00096">
    <property type="entry name" value="Ig"/>
    <property type="match status" value="1"/>
</dbReference>
<dbReference type="CDD" id="cd05865">
    <property type="entry name" value="IgI_1_NCAM-1"/>
    <property type="match status" value="1"/>
</dbReference>
<dbReference type="CDD" id="cd05869">
    <property type="entry name" value="IgI_NCAM-1"/>
    <property type="match status" value="1"/>
</dbReference>
<dbReference type="FunFam" id="2.60.40.10:FF:000086">
    <property type="entry name" value="Neural cell adhesion molecule 1"/>
    <property type="match status" value="1"/>
</dbReference>
<dbReference type="FunFam" id="2.60.40.10:FF:000173">
    <property type="entry name" value="Neural cell adhesion molecule 1"/>
    <property type="match status" value="1"/>
</dbReference>
<dbReference type="FunFam" id="2.60.40.10:FF:000151">
    <property type="entry name" value="neural cell adhesion molecule 1 isoform X1"/>
    <property type="match status" value="1"/>
</dbReference>
<dbReference type="FunFam" id="2.60.40.10:FF:000137">
    <property type="entry name" value="neural cell adhesion molecule 1 isoform X2"/>
    <property type="match status" value="1"/>
</dbReference>
<dbReference type="FunFam" id="2.60.40.10:FF:000149">
    <property type="entry name" value="neural cell adhesion molecule 1 isoform X2"/>
    <property type="match status" value="1"/>
</dbReference>
<dbReference type="FunFam" id="2.60.40.10:FF:000159">
    <property type="entry name" value="neural cell adhesion molecule 1 isoform X2"/>
    <property type="match status" value="1"/>
</dbReference>
<dbReference type="FunFam" id="2.60.40.10:FF:000221">
    <property type="entry name" value="neural cell adhesion molecule 1 isoform X2"/>
    <property type="match status" value="1"/>
</dbReference>
<dbReference type="Gene3D" id="2.60.40.10">
    <property type="entry name" value="Immunoglobulins"/>
    <property type="match status" value="7"/>
</dbReference>
<dbReference type="InterPro" id="IPR003961">
    <property type="entry name" value="FN3_dom"/>
</dbReference>
<dbReference type="InterPro" id="IPR036116">
    <property type="entry name" value="FN3_sf"/>
</dbReference>
<dbReference type="InterPro" id="IPR007110">
    <property type="entry name" value="Ig-like_dom"/>
</dbReference>
<dbReference type="InterPro" id="IPR036179">
    <property type="entry name" value="Ig-like_dom_sf"/>
</dbReference>
<dbReference type="InterPro" id="IPR013783">
    <property type="entry name" value="Ig-like_fold"/>
</dbReference>
<dbReference type="InterPro" id="IPR013098">
    <property type="entry name" value="Ig_I-set"/>
</dbReference>
<dbReference type="InterPro" id="IPR003599">
    <property type="entry name" value="Ig_sub"/>
</dbReference>
<dbReference type="InterPro" id="IPR003598">
    <property type="entry name" value="Ig_sub2"/>
</dbReference>
<dbReference type="InterPro" id="IPR009138">
    <property type="entry name" value="Neural_cell_adh"/>
</dbReference>
<dbReference type="PANTHER" id="PTHR10075">
    <property type="entry name" value="BASIGIN RELATED"/>
    <property type="match status" value="1"/>
</dbReference>
<dbReference type="PANTHER" id="PTHR10075:SF100">
    <property type="entry name" value="FASCICLIN-2"/>
    <property type="match status" value="1"/>
</dbReference>
<dbReference type="Pfam" id="PF00041">
    <property type="entry name" value="fn3"/>
    <property type="match status" value="2"/>
</dbReference>
<dbReference type="Pfam" id="PF07679">
    <property type="entry name" value="I-set"/>
    <property type="match status" value="2"/>
</dbReference>
<dbReference type="Pfam" id="PF13927">
    <property type="entry name" value="Ig_3"/>
    <property type="match status" value="3"/>
</dbReference>
<dbReference type="PRINTS" id="PR01838">
    <property type="entry name" value="NCAMFAMILY"/>
</dbReference>
<dbReference type="SMART" id="SM00060">
    <property type="entry name" value="FN3"/>
    <property type="match status" value="2"/>
</dbReference>
<dbReference type="SMART" id="SM00409">
    <property type="entry name" value="IG"/>
    <property type="match status" value="5"/>
</dbReference>
<dbReference type="SMART" id="SM00408">
    <property type="entry name" value="IGc2"/>
    <property type="match status" value="5"/>
</dbReference>
<dbReference type="SUPFAM" id="SSF49265">
    <property type="entry name" value="Fibronectin type III"/>
    <property type="match status" value="1"/>
</dbReference>
<dbReference type="SUPFAM" id="SSF48726">
    <property type="entry name" value="Immunoglobulin"/>
    <property type="match status" value="5"/>
</dbReference>
<dbReference type="PROSITE" id="PS50853">
    <property type="entry name" value="FN3"/>
    <property type="match status" value="2"/>
</dbReference>
<dbReference type="PROSITE" id="PS50835">
    <property type="entry name" value="IG_LIKE"/>
    <property type="match status" value="5"/>
</dbReference>
<feature type="signal peptide" evidence="1">
    <location>
        <begin position="1"/>
        <end position="19"/>
    </location>
</feature>
<feature type="chain" id="PRO_0000015009" description="Neural cell adhesion molecule 1">
    <location>
        <begin position="20"/>
        <end position="858"/>
    </location>
</feature>
<feature type="topological domain" description="Extracellular" evidence="4">
    <location>
        <begin position="20"/>
        <end position="718"/>
    </location>
</feature>
<feature type="transmembrane region" description="Helical" evidence="4">
    <location>
        <begin position="719"/>
        <end position="739"/>
    </location>
</feature>
<feature type="topological domain" description="Cytoplasmic" evidence="4">
    <location>
        <begin position="740"/>
        <end position="858"/>
    </location>
</feature>
<feature type="domain" description="Ig-like C2-type 1">
    <location>
        <begin position="20"/>
        <end position="111"/>
    </location>
</feature>
<feature type="domain" description="Ig-like C2-type 2">
    <location>
        <begin position="116"/>
        <end position="205"/>
    </location>
</feature>
<feature type="domain" description="Ig-like C2-type 3">
    <location>
        <begin position="212"/>
        <end position="301"/>
    </location>
</feature>
<feature type="domain" description="Ig-like C2-type 4">
    <location>
        <begin position="308"/>
        <end position="413"/>
    </location>
</feature>
<feature type="domain" description="Ig-like C2-type 5">
    <location>
        <begin position="416"/>
        <end position="501"/>
    </location>
</feature>
<feature type="domain" description="Fibronectin type-III 1" evidence="5">
    <location>
        <begin position="509"/>
        <end position="608"/>
    </location>
</feature>
<feature type="domain" description="Fibronectin type-III 2" evidence="5">
    <location>
        <begin position="611"/>
        <end position="706"/>
    </location>
</feature>
<feature type="region of interest" description="Disordered" evidence="6">
    <location>
        <begin position="766"/>
        <end position="858"/>
    </location>
</feature>
<feature type="compositionally biased region" description="Basic and acidic residues" evidence="6">
    <location>
        <begin position="768"/>
        <end position="809"/>
    </location>
</feature>
<feature type="compositionally biased region" description="Basic and acidic residues" evidence="6">
    <location>
        <begin position="817"/>
        <end position="834"/>
    </location>
</feature>
<feature type="modified residue" description="Phosphoserine" evidence="3">
    <location>
        <position position="780"/>
    </location>
</feature>
<feature type="modified residue" description="Phosphoserine" evidence="3">
    <location>
        <position position="784"/>
    </location>
</feature>
<feature type="glycosylation site" description="N-linked (GlcNAc...) asparagine" evidence="4">
    <location>
        <position position="222"/>
    </location>
</feature>
<feature type="glycosylation site" description="N-linked (GlcNAc...) asparagine" evidence="4">
    <location>
        <position position="315"/>
    </location>
</feature>
<feature type="glycosylation site" description="N-linked (GlcNAc...) asparagine" evidence="4">
    <location>
        <position position="347"/>
    </location>
</feature>
<feature type="glycosylation site" description="N-linked (GlcNAc...) asparagine" evidence="4">
    <location>
        <position position="433"/>
    </location>
</feature>
<feature type="glycosylation site" description="N-linked (GlcNAc...) asparagine" evidence="8 12">
    <location>
        <position position="459"/>
    </location>
</feature>
<feature type="glycosylation site" description="N-linked (GlcNAc...) asparagine" evidence="4 12">
    <location>
        <position position="488"/>
    </location>
</feature>
<feature type="disulfide bond" evidence="3">
    <location>
        <begin position="41"/>
        <end position="96"/>
    </location>
</feature>
<feature type="disulfide bond" evidence="3">
    <location>
        <begin position="139"/>
        <end position="189"/>
    </location>
</feature>
<feature type="disulfide bond" evidence="2">
    <location>
        <begin position="235"/>
        <end position="287"/>
    </location>
</feature>
<feature type="disulfide bond" evidence="20">
    <location>
        <begin position="329"/>
        <end position="395"/>
    </location>
</feature>
<feature type="disulfide bond" evidence="20">
    <location>
        <begin position="436"/>
        <end position="489"/>
    </location>
</feature>
<feature type="splice variant" id="VSP_034818" description="In isoform 2, isoform 3 and isoform 4." evidence="14 15 17 18 19">
    <location>
        <begin position="354"/>
        <end position="363"/>
    </location>
</feature>
<feature type="splice variant" id="VSP_034819" description="In isoform 6." evidence="13">
    <original>T</original>
    <variation>V</variation>
    <location>
        <position position="364"/>
    </location>
</feature>
<feature type="splice variant" id="VSP_034820" description="In isoform 6." evidence="13">
    <location>
        <begin position="365"/>
        <end position="858"/>
    </location>
</feature>
<feature type="splice variant" id="VSP_034821" description="In isoform 5." evidence="16">
    <original>QGEPSAPKLEGQMGEDGNSIKVNLIKQDDGGSPIRHYLVRYRALSSEWKPEIRLPSG</original>
    <variation>HSPPPPASASSSTPVPLSPPDTTWPLPALATTEPAKNIAQNHCCNMFQAGLHNALMK</variation>
    <location>
        <begin position="609"/>
        <end position="665"/>
    </location>
</feature>
<feature type="splice variant" id="VSP_034822" description="In isoform 3." evidence="15 17">
    <original>Q</original>
    <variation>HSPPPPASASSSTPVPLSPPDTTWPLPALATTEPAK</variation>
    <location>
        <position position="609"/>
    </location>
</feature>
<feature type="splice variant" id="VSP_034823" description="In isoform 5." evidence="16">
    <location>
        <begin position="666"/>
        <end position="858"/>
    </location>
</feature>
<feature type="splice variant" id="VSP_034824" description="In isoform 3 and isoform 4." evidence="15 17 19">
    <original>NGSPTSGLSTGAIVGILIVIFVLLL</original>
    <variation>TLGGNSASYTFVSLLFSAVTLLLLC</variation>
    <location>
        <begin position="712"/>
        <end position="736"/>
    </location>
</feature>
<feature type="splice variant" id="VSP_034825" description="In isoform 3 and isoform 4." evidence="15 17 19">
    <location>
        <begin position="737"/>
        <end position="858"/>
    </location>
</feature>
<feature type="sequence variant" id="VAR_061331" description="In dbSNP:rs7105734.">
    <original>L</original>
    <variation>F</variation>
    <location>
        <position position="7"/>
    </location>
</feature>
<feature type="sequence variant" id="VAR_049960" description="In dbSNP:rs17115160.">
    <original>D</original>
    <variation>N</variation>
    <location>
        <position position="260"/>
    </location>
</feature>
<feature type="sequence variant" id="VAR_049961" description="In dbSNP:rs17115280." evidence="7">
    <original>E</original>
    <variation>D</variation>
    <location>
        <position position="679"/>
    </location>
</feature>
<feature type="sequence variant" id="VAR_049962" description="In dbSNP:rs17174409.">
    <original>T</original>
    <variation>M</variation>
    <location>
        <position position="834"/>
    </location>
</feature>
<feature type="mutagenesis site" description="Loss of polysialic acid addition by ST8SIA4; when associated with Q-459 and Q-488. Loss of polysialic acid addition by ST8SIA2; when associated with Q-459 and Q-488. Significantly decreases polysialic acid addition by ST8SIA2; when associated with Q-488. Decreases polysialic acid addition by ST8SIA2; when associated with Q-459. Decreases polysialic acid addition by ST8SIA4; when associated with Q-459. Does not affect polysialic acid addition by ST8SIA2. Does not affect polysialic acid addition by ST8SIA4." evidence="12">
    <original>N</original>
    <variation>Q</variation>
    <location>
        <position position="433"/>
    </location>
</feature>
<feature type="mutagenesis site" description="Loss of polysialic acid addition by ST8SIA4; when associated with Q-433 and Q-488. Loss of polysialic acid addition by ST8SIA2; when associated with Q-433 and Q-488. Loss of polysialic acid addition by ST8SIA4; when associated with Q-488. Loss of polysialic acid addition by ST8SIA2; when associated with Q-488. Decreases polysialic acid addition by ST8SIA2. Decreases polysialic acid addition by ST8SIA4." evidence="12">
    <original>N</original>
    <variation>Q</variation>
    <location>
        <position position="459"/>
    </location>
</feature>
<feature type="mutagenesis site" description="Loss of polysialic acid addition by ST8SIA4; when associated with Q-433 and Q-459. Loss of polysialic acid addition by ST8SIA2; when associated with Q-433 and Q-459. Loss of polysialic acid addition by ST8SIA4; when associated with Q-459. Loss of polysialic acid addition by ST8SIA2; when associated with Q-459. Significantly decreases polysialic acid addition by ST8SIA2." evidence="12">
    <original>N</original>
    <variation>Q</variation>
    <location>
        <position position="488"/>
    </location>
</feature>
<feature type="sequence conflict" description="In Ref. 2; AAB04558." evidence="20" ref="2">
    <original>Q</original>
    <variation>R</variation>
    <location>
        <position position="215"/>
    </location>
</feature>
<feature type="sequence conflict" description="In Ref. 2; AAB04558." evidence="20" ref="2">
    <original>G</original>
    <variation>R</variation>
    <location>
        <position position="239"/>
    </location>
</feature>
<feature type="sequence conflict" description="In Ref. 2; AAB04558." evidence="20" ref="2">
    <original>L</original>
    <variation>F</variation>
    <location>
        <position position="500"/>
    </location>
</feature>
<feature type="sequence conflict" description="In Ref. 4; BAF85142." evidence="20" ref="4">
    <original>Y</original>
    <variation>H</variation>
    <location>
        <position position="560"/>
    </location>
</feature>
<feature type="sequence conflict" description="In Ref. 8; AAA59913." evidence="20" ref="8">
    <original>QG</original>
    <variation>R</variation>
    <location>
        <begin position="609"/>
        <end position="610"/>
    </location>
</feature>
<feature type="sequence conflict" description="In Ref. 8; AAA59913." evidence="20" ref="8">
    <location>
        <begin position="730"/>
        <end position="731"/>
    </location>
</feature>
<feature type="sequence conflict" description="In Ref. 8; AAA59913." evidence="20" ref="8">
    <original>G</original>
    <variation>A</variation>
    <location>
        <position position="821"/>
    </location>
</feature>
<feature type="sequence conflict" description="In Ref. 6; AAH47244." evidence="20" ref="6">
    <original>S</original>
    <variation>N</variation>
    <location>
        <position position="856"/>
    </location>
</feature>
<feature type="strand" evidence="25">
    <location>
        <begin position="21"/>
        <end position="32"/>
    </location>
</feature>
<feature type="strand" evidence="25">
    <location>
        <begin position="37"/>
        <end position="45"/>
    </location>
</feature>
<feature type="strand" evidence="25">
    <location>
        <begin position="51"/>
        <end position="55"/>
    </location>
</feature>
<feature type="strand" evidence="25">
    <location>
        <begin position="69"/>
        <end position="75"/>
    </location>
</feature>
<feature type="strand" evidence="25">
    <location>
        <begin position="78"/>
        <end position="83"/>
    </location>
</feature>
<feature type="helix" evidence="25">
    <location>
        <begin position="88"/>
        <end position="90"/>
    </location>
</feature>
<feature type="strand" evidence="25">
    <location>
        <begin position="92"/>
        <end position="99"/>
    </location>
</feature>
<feature type="strand" evidence="25">
    <location>
        <begin position="105"/>
        <end position="115"/>
    </location>
</feature>
<feature type="strand" evidence="24">
    <location>
        <begin position="414"/>
        <end position="419"/>
    </location>
</feature>
<feature type="strand" evidence="24">
    <location>
        <begin position="422"/>
        <end position="426"/>
    </location>
</feature>
<feature type="strand" evidence="24">
    <location>
        <begin position="432"/>
        <end position="442"/>
    </location>
</feature>
<feature type="strand" evidence="24">
    <location>
        <begin position="445"/>
        <end position="450"/>
    </location>
</feature>
<feature type="strand" evidence="24">
    <location>
        <begin position="453"/>
        <end position="456"/>
    </location>
</feature>
<feature type="strand" evidence="24">
    <location>
        <begin position="458"/>
        <end position="460"/>
    </location>
</feature>
<feature type="strand" evidence="24">
    <location>
        <begin position="462"/>
        <end position="468"/>
    </location>
</feature>
<feature type="strand" evidence="24">
    <location>
        <begin position="471"/>
        <end position="476"/>
    </location>
</feature>
<feature type="helix" evidence="24">
    <location>
        <begin position="481"/>
        <end position="483"/>
    </location>
</feature>
<feature type="strand" evidence="24">
    <location>
        <begin position="485"/>
        <end position="492"/>
    </location>
</feature>
<feature type="strand" evidence="24">
    <location>
        <begin position="497"/>
        <end position="506"/>
    </location>
</feature>
<feature type="strand" evidence="22">
    <location>
        <begin position="514"/>
        <end position="520"/>
    </location>
</feature>
<feature type="strand" evidence="22">
    <location>
        <begin position="525"/>
        <end position="530"/>
    </location>
</feature>
<feature type="strand" evidence="22">
    <location>
        <begin position="542"/>
        <end position="549"/>
    </location>
</feature>
<feature type="strand" evidence="22">
    <location>
        <begin position="556"/>
        <end position="561"/>
    </location>
</feature>
<feature type="helix" evidence="22">
    <location>
        <begin position="562"/>
        <end position="568"/>
    </location>
</feature>
<feature type="strand" evidence="22">
    <location>
        <begin position="569"/>
        <end position="573"/>
    </location>
</feature>
<feature type="strand" evidence="22">
    <location>
        <begin position="581"/>
        <end position="590"/>
    </location>
</feature>
<feature type="strand" evidence="22">
    <location>
        <begin position="601"/>
        <end position="604"/>
    </location>
</feature>
<feature type="strand" evidence="23">
    <location>
        <begin position="616"/>
        <end position="621"/>
    </location>
</feature>
<feature type="strand" evidence="23">
    <location>
        <begin position="628"/>
        <end position="633"/>
    </location>
</feature>
<feature type="strand" evidence="26">
    <location>
        <begin position="638"/>
        <end position="640"/>
    </location>
</feature>
<feature type="strand" evidence="23">
    <location>
        <begin position="644"/>
        <end position="651"/>
    </location>
</feature>
<feature type="strand" evidence="23">
    <location>
        <begin position="660"/>
        <end position="662"/>
    </location>
</feature>
<feature type="strand" evidence="23">
    <location>
        <begin position="668"/>
        <end position="671"/>
    </location>
</feature>
<feature type="strand" evidence="26">
    <location>
        <begin position="676"/>
        <end position="678"/>
    </location>
</feature>
<feature type="strand" evidence="23">
    <location>
        <begin position="679"/>
        <end position="688"/>
    </location>
</feature>
<feature type="strand" evidence="23">
    <location>
        <begin position="696"/>
        <end position="701"/>
    </location>
</feature>
<feature type="lipid moiety-binding region" description="GPI-anchor amidated asparagine" evidence="4">
    <location sequence="P13591-3">
        <position position="741"/>
    </location>
</feature>
<feature type="lipid moiety-binding region" description="GPI-anchor amidated asparagine" evidence="4">
    <location sequence="P13591-4">
        <position position="706"/>
    </location>
</feature>
<comment type="function">
    <text>This protein is a cell adhesion molecule involved in neuron-neuron adhesion, neurite fasciculation, outgrowth of neurites, etc.</text>
</comment>
<comment type="function">
    <text evidence="11">(Microbial infection) Acts as a receptor for rabies virus.</text>
</comment>
<comment type="function">
    <text evidence="10">(Microbial infection) Acts as a receptor for Zika virus.</text>
</comment>
<comment type="subunit">
    <text evidence="11">(Microbial infection) Interacts with rabies virus glycoprotein.</text>
</comment>
<comment type="subunit">
    <text evidence="10">(Microbial infection) Interacts with Zika virus envelope protein E.</text>
</comment>
<comment type="subunit">
    <text evidence="3">Interacts with MDK. Found in a complex with SLC39A6, SLC39A10 and with NCAM1; this complex controls NCAM1 phosphorylation and integration into focal adhesion complexes during epithelial-tomesenchymal transition. Interacts with synaptic plasticity regulator PANTS.</text>
</comment>
<comment type="interaction">
    <interactant intactId="EBI-2846607">
        <id>P13591</id>
    </interactant>
    <interactant intactId="EBI-3904795">
        <id>P25098</id>
        <label>GRK2</label>
    </interactant>
    <organismsDiffer>false</organismsDiffer>
    <experiments>3</experiments>
</comment>
<comment type="interaction">
    <interactant intactId="EBI-2846607">
        <id>P13591</id>
    </interactant>
    <interactant intactId="EBI-357085">
        <id>Q9UNE7</id>
        <label>STUB1</label>
    </interactant>
    <organismsDiffer>false</organismsDiffer>
    <experiments>3</experiments>
</comment>
<comment type="subcellular location">
    <molecule>Isoform 1</molecule>
    <subcellularLocation>
        <location>Cell membrane</location>
        <topology>Single-pass type I membrane protein</topology>
    </subcellularLocation>
</comment>
<comment type="subcellular location">
    <molecule>Isoform 2</molecule>
    <subcellularLocation>
        <location>Cell membrane</location>
        <topology>Single-pass type I membrane protein</topology>
    </subcellularLocation>
</comment>
<comment type="subcellular location">
    <molecule>Isoform 3</molecule>
    <subcellularLocation>
        <location>Cell membrane</location>
        <topology>Lipid-anchor</topology>
        <topology>GPI-anchor</topology>
    </subcellularLocation>
</comment>
<comment type="subcellular location">
    <molecule>Isoform 4</molecule>
    <subcellularLocation>
        <location evidence="20">Cell membrane</location>
        <topology evidence="20">Lipid-anchor</topology>
        <topology evidence="20">GPI-anchor</topology>
    </subcellularLocation>
</comment>
<comment type="subcellular location">
    <molecule>Isoform 5</molecule>
    <subcellularLocation>
        <location>Secreted</location>
    </subcellularLocation>
</comment>
<comment type="subcellular location">
    <molecule>Isoform 6</molecule>
    <subcellularLocation>
        <location evidence="20">Secreted</location>
    </subcellularLocation>
</comment>
<comment type="alternative products">
    <event type="alternative splicing"/>
    <isoform>
        <id>P13591-2</id>
        <name>1</name>
        <sequence type="displayed"/>
    </isoform>
    <isoform>
        <id>P13591-1</id>
        <name>2</name>
        <name>N-CAM 140</name>
        <sequence type="described" ref="VSP_034818"/>
    </isoform>
    <isoform>
        <id>P13591-3</id>
        <id>P13592-2</id>
        <name>3</name>
        <name>N-CAM 120</name>
        <sequence type="described" ref="VSP_034818 VSP_034822 VSP_034824 VSP_034825"/>
    </isoform>
    <isoform>
        <id>P13591-4</id>
        <name>4</name>
        <sequence type="described" ref="VSP_034818 VSP_034824 VSP_034825"/>
    </isoform>
    <isoform>
        <id>P13591-5</id>
        <id>P13592-1</id>
        <name>5</name>
        <name>C</name>
        <sequence type="described" ref="VSP_034821 VSP_034823"/>
    </isoform>
    <isoform>
        <id>P13591-6</id>
        <name>6</name>
        <sequence type="described" ref="VSP_034819 VSP_034820"/>
    </isoform>
</comment>
<comment type="PTM">
    <text evidence="9 12">Polysialylated at Asn-459 and Asn-488 by ST8SIA2 and ST8SIA4 (PubMed:28810663). Polysialylation modulates cell interactions by confering both attractive and repulsive properties that are highly regulated by ST8SIA2 and ST8SIA4 (PubMed:28810663). Polysialylation is formed on a-2,3-linked sialic acid of core glycans (PubMed:9774483).</text>
</comment>
<comment type="miscellaneous">
    <molecule>Isoform 5</molecule>
    <text evidence="20">May be produced at very low levels due to a premature stop codon in the mRNA, leading to nonsense-mediated mRNA decay.</text>
</comment>
<comment type="sequence caution" evidence="20">
    <conflict type="erroneous initiation">
        <sequence resource="EMBL-CDS" id="BAD92680"/>
    </conflict>
    <text>Extended N-terminus.</text>
</comment>
<comment type="online information" name="Wikipedia">
    <link uri="https://en.wikipedia.org/wiki/NCAM"/>
    <text>NCAM entry</text>
</comment>
<comment type="online information" name="Functional Glycomics Gateway - Glycan Binding">
    <link uri="http://www.functionalglycomics.org/glycomics/GBPServlet?&amp;operationType=view&amp;cbpId=cbp_hum_Itlect_264"/>
    <text>N-CAM 140</text>
</comment>
<name>NCAM1_HUMAN</name>
<gene>
    <name evidence="21" type="primary">NCAM1</name>
    <name type="synonym">NCAM</name>
</gene>
<reference key="1">
    <citation type="journal article" date="1988" name="Development">
        <title>Complete sequence and in vitro expression of a tissue-specific phosphatidylinositol-linked N-CAM isoform from skeletal muscle.</title>
        <authorList>
            <person name="Barton C.H."/>
            <person name="Dickson G."/>
            <person name="Gower H.J."/>
            <person name="Rowett L.H."/>
            <person name="Putt W."/>
            <person name="Elsom V."/>
            <person name="Moore S.E."/>
            <person name="Goridis C."/>
            <person name="Walsh F.S."/>
        </authorList>
    </citation>
    <scope>NUCLEOTIDE SEQUENCE [MRNA] (ISOFORM 3)</scope>
    <source>
        <tissue>Skeletal muscle</tissue>
    </source>
</reference>
<reference key="2">
    <citation type="journal article" date="1991" name="J. Immunol.">
        <title>Molecular and functional analysis of human natural killer cell-associated neural cell adhesion molecule (N-CAM/CD56).</title>
        <authorList>
            <person name="Lanier L.L."/>
            <person name="Chang C."/>
            <person name="Azuma M."/>
            <person name="Ruitenberg J.J."/>
            <person name="Hemperly J.J."/>
            <person name="Phillips J.H."/>
        </authorList>
    </citation>
    <scope>NUCLEOTIDE SEQUENCE [MRNA] (ISOFORM 2)</scope>
</reference>
<reference key="3">
    <citation type="journal article" date="1994" name="Lung Cancer">
        <title>Complementary DNA sequence encoding the major neural cell adhesion molecule isoform in a human small cell lung cancer cell line.</title>
        <authorList>
            <person name="Saito S."/>
            <person name="Tanio Y."/>
            <person name="Tachibana I."/>
            <person name="Hayashi S."/>
            <person name="Kishimoto T."/>
            <person name="Kawase I."/>
        </authorList>
    </citation>
    <scope>NUCLEOTIDE SEQUENCE [MRNA] (ISOFORM 2)</scope>
</reference>
<reference key="4">
    <citation type="journal article" date="2004" name="Nat. Genet.">
        <title>Complete sequencing and characterization of 21,243 full-length human cDNAs.</title>
        <authorList>
            <person name="Ota T."/>
            <person name="Suzuki Y."/>
            <person name="Nishikawa T."/>
            <person name="Otsuki T."/>
            <person name="Sugiyama T."/>
            <person name="Irie R."/>
            <person name="Wakamatsu A."/>
            <person name="Hayashi K."/>
            <person name="Sato H."/>
            <person name="Nagai K."/>
            <person name="Kimura K."/>
            <person name="Makita H."/>
            <person name="Sekine M."/>
            <person name="Obayashi M."/>
            <person name="Nishi T."/>
            <person name="Shibahara T."/>
            <person name="Tanaka T."/>
            <person name="Ishii S."/>
            <person name="Yamamoto J."/>
            <person name="Saito K."/>
            <person name="Kawai Y."/>
            <person name="Isono Y."/>
            <person name="Nakamura Y."/>
            <person name="Nagahari K."/>
            <person name="Murakami K."/>
            <person name="Yasuda T."/>
            <person name="Iwayanagi T."/>
            <person name="Wagatsuma M."/>
            <person name="Shiratori A."/>
            <person name="Sudo H."/>
            <person name="Hosoiri T."/>
            <person name="Kaku Y."/>
            <person name="Kodaira H."/>
            <person name="Kondo H."/>
            <person name="Sugawara M."/>
            <person name="Takahashi M."/>
            <person name="Kanda K."/>
            <person name="Yokoi T."/>
            <person name="Furuya T."/>
            <person name="Kikkawa E."/>
            <person name="Omura Y."/>
            <person name="Abe K."/>
            <person name="Kamihara K."/>
            <person name="Katsuta N."/>
            <person name="Sato K."/>
            <person name="Tanikawa M."/>
            <person name="Yamazaki M."/>
            <person name="Ninomiya K."/>
            <person name="Ishibashi T."/>
            <person name="Yamashita H."/>
            <person name="Murakawa K."/>
            <person name="Fujimori K."/>
            <person name="Tanai H."/>
            <person name="Kimata M."/>
            <person name="Watanabe M."/>
            <person name="Hiraoka S."/>
            <person name="Chiba Y."/>
            <person name="Ishida S."/>
            <person name="Ono Y."/>
            <person name="Takiguchi S."/>
            <person name="Watanabe S."/>
            <person name="Yosida M."/>
            <person name="Hotuta T."/>
            <person name="Kusano J."/>
            <person name="Kanehori K."/>
            <person name="Takahashi-Fujii A."/>
            <person name="Hara H."/>
            <person name="Tanase T.-O."/>
            <person name="Nomura Y."/>
            <person name="Togiya S."/>
            <person name="Komai F."/>
            <person name="Hara R."/>
            <person name="Takeuchi K."/>
            <person name="Arita M."/>
            <person name="Imose N."/>
            <person name="Musashino K."/>
            <person name="Yuuki H."/>
            <person name="Oshima A."/>
            <person name="Sasaki N."/>
            <person name="Aotsuka S."/>
            <person name="Yoshikawa Y."/>
            <person name="Matsunawa H."/>
            <person name="Ichihara T."/>
            <person name="Shiohata N."/>
            <person name="Sano S."/>
            <person name="Moriya S."/>
            <person name="Momiyama H."/>
            <person name="Satoh N."/>
            <person name="Takami S."/>
            <person name="Terashima Y."/>
            <person name="Suzuki O."/>
            <person name="Nakagawa S."/>
            <person name="Senoh A."/>
            <person name="Mizoguchi H."/>
            <person name="Goto Y."/>
            <person name="Shimizu F."/>
            <person name="Wakebe H."/>
            <person name="Hishigaki H."/>
            <person name="Watanabe T."/>
            <person name="Sugiyama A."/>
            <person name="Takemoto M."/>
            <person name="Kawakami B."/>
            <person name="Yamazaki M."/>
            <person name="Watanabe K."/>
            <person name="Kumagai A."/>
            <person name="Itakura S."/>
            <person name="Fukuzumi Y."/>
            <person name="Fujimori Y."/>
            <person name="Komiyama M."/>
            <person name="Tashiro H."/>
            <person name="Tanigami A."/>
            <person name="Fujiwara T."/>
            <person name="Ono T."/>
            <person name="Yamada K."/>
            <person name="Fujii Y."/>
            <person name="Ozaki K."/>
            <person name="Hirao M."/>
            <person name="Ohmori Y."/>
            <person name="Kawabata A."/>
            <person name="Hikiji T."/>
            <person name="Kobatake N."/>
            <person name="Inagaki H."/>
            <person name="Ikema Y."/>
            <person name="Okamoto S."/>
            <person name="Okitani R."/>
            <person name="Kawakami T."/>
            <person name="Noguchi S."/>
            <person name="Itoh T."/>
            <person name="Shigeta K."/>
            <person name="Senba T."/>
            <person name="Matsumura K."/>
            <person name="Nakajima Y."/>
            <person name="Mizuno T."/>
            <person name="Morinaga M."/>
            <person name="Sasaki M."/>
            <person name="Togashi T."/>
            <person name="Oyama M."/>
            <person name="Hata H."/>
            <person name="Watanabe M."/>
            <person name="Komatsu T."/>
            <person name="Mizushima-Sugano J."/>
            <person name="Satoh T."/>
            <person name="Shirai Y."/>
            <person name="Takahashi Y."/>
            <person name="Nakagawa K."/>
            <person name="Okumura K."/>
            <person name="Nagase T."/>
            <person name="Nomura N."/>
            <person name="Kikuchi H."/>
            <person name="Masuho Y."/>
            <person name="Yamashita R."/>
            <person name="Nakai K."/>
            <person name="Yada T."/>
            <person name="Nakamura Y."/>
            <person name="Ohara O."/>
            <person name="Isogai T."/>
            <person name="Sugano S."/>
        </authorList>
    </citation>
    <scope>NUCLEOTIDE SEQUENCE [LARGE SCALE MRNA] (ISOFORM 1)</scope>
    <source>
        <tissue>Testis</tissue>
    </source>
</reference>
<reference key="5">
    <citation type="submission" date="2005-03" db="EMBL/GenBank/DDBJ databases">
        <authorList>
            <person name="Totoki Y."/>
            <person name="Toyoda A."/>
            <person name="Takeda T."/>
            <person name="Sakaki Y."/>
            <person name="Tanaka A."/>
            <person name="Yokoyama S."/>
            <person name="Ohara O."/>
            <person name="Nagase T."/>
            <person name="Kikuno R.F."/>
        </authorList>
    </citation>
    <scope>NUCLEOTIDE SEQUENCE [LARGE SCALE MRNA] (ISOFORM 4)</scope>
    <source>
        <tissue>Brain</tissue>
    </source>
</reference>
<reference key="6">
    <citation type="journal article" date="2004" name="Genome Res.">
        <title>The status, quality, and expansion of the NIH full-length cDNA project: the Mammalian Gene Collection (MGC).</title>
        <authorList>
            <consortium name="The MGC Project Team"/>
        </authorList>
    </citation>
    <scope>NUCLEOTIDE SEQUENCE [LARGE SCALE MRNA] (ISOFORMS 1 AND 6)</scope>
    <scope>VARIANT ASP-679</scope>
    <source>
        <tissue>Brain</tissue>
        <tissue>Kidney</tissue>
        <tissue>Ovary</tissue>
    </source>
</reference>
<reference key="7">
    <citation type="journal article" date="1992" name="Int. J. Cancer">
        <title>Splicing of the VASE exon of neural cell adhesion molecule (NCAM) in human small-cell lung carcinoma (SCLC).</title>
        <authorList>
            <person name="van Duijnhoven H.L."/>
            <person name="Helfrich W."/>
            <person name="de Leij L."/>
            <person name="Roebroek A.J."/>
            <person name="van de Ven W.J."/>
            <person name="Healey K."/>
            <person name="Culverwell A."/>
            <person name="Rossell R.J."/>
            <person name="Kemshead J.T."/>
            <person name="Patel K."/>
        </authorList>
    </citation>
    <scope>NUCLEOTIDE SEQUENCE [MRNA] OF 347-369</scope>
</reference>
<reference key="8">
    <citation type="journal article" date="1987" name="Cell">
        <title>Human muscle neural cell adhesion molecule (N-CAM): identification of a muscle-specific sequence in the extracellular domain.</title>
        <authorList>
            <person name="Dickson G."/>
            <person name="Gower H.J."/>
            <person name="Barton C.H."/>
            <person name="Prentice H.M."/>
            <person name="Elsom V.L."/>
            <person name="Moore S.E."/>
            <person name="Cox R.D."/>
            <person name="Quinn C."/>
            <person name="Putt W."/>
            <person name="Walsh F.S."/>
        </authorList>
    </citation>
    <scope>NUCLEOTIDE SEQUENCE [MRNA] OF 501-858 (ISOFORMS 1/2 AND 3)</scope>
    <source>
        <tissue>Skeletal muscle</tissue>
    </source>
</reference>
<reference key="9">
    <citation type="journal article" date="1988" name="Cell">
        <title>Alternative splicing generates a secreted form of N-CAM in muscle and brain.</title>
        <authorList>
            <person name="Gower H.J."/>
            <person name="Barton C.H."/>
            <person name="Elsom V.L."/>
            <person name="Thompson J."/>
            <person name="Moore S.E."/>
            <person name="Dickson G."/>
            <person name="Walsh F.S."/>
        </authorList>
    </citation>
    <scope>NUCLEOTIDE SEQUENCE [GENOMIC DNA / MRNA] OF 501-858 (ISOFORM 5)</scope>
</reference>
<reference key="10">
    <citation type="journal article" date="1998" name="J. Biol. Chem.">
        <title>Differential and cooperative polysialylation of the neural cell adhesion molecule by two polysialyltransferases, PST and STX.</title>
        <authorList>
            <person name="Angata K."/>
            <person name="Suzuki M."/>
            <person name="Fukuda M."/>
        </authorList>
    </citation>
    <scope>MUTAGENESIS OF ASN-433; ASN-459 AND ASN-488</scope>
    <scope>POLYSIALYLATION AT ASN-459 AND ASN-488</scope>
    <scope>GLYCOSYLATION AT ASN-488</scope>
</reference>
<reference key="11">
    <citation type="journal article" date="1998" name="J. Virol.">
        <title>The neural cell adhesion molecule is a receptor for rabies virus.</title>
        <authorList>
            <person name="Thoulouze M.I."/>
            <person name="Lafage M."/>
            <person name="Schachner M."/>
            <person name="Hartmann U."/>
            <person name="Cremer H."/>
            <person name="Lafon M."/>
        </authorList>
    </citation>
    <scope>FUNCTION (MICROBIAL INFECTION)</scope>
    <scope>INTERACTION WITH RABIES VIRUS GLYCOPROTEIN</scope>
</reference>
<reference key="12">
    <citation type="journal article" date="2005" name="J. Proteome Res.">
        <title>Human plasma N-glycoproteome analysis by immunoaffinity subtraction, hydrazide chemistry, and mass spectrometry.</title>
        <authorList>
            <person name="Liu T."/>
            <person name="Qian W.-J."/>
            <person name="Gritsenko M.A."/>
            <person name="Camp D.G. II"/>
            <person name="Monroe M.E."/>
            <person name="Moore R.J."/>
            <person name="Smith R.D."/>
        </authorList>
    </citation>
    <scope>GLYCOSYLATION [LARGE SCALE ANALYSIS] AT ASN-459</scope>
    <source>
        <tissue>Plasma</tissue>
    </source>
</reference>
<reference key="13">
    <citation type="journal article" date="2014" name="J. Proteomics">
        <title>An enzyme assisted RP-RPLC approach for in-depth analysis of human liver phosphoproteome.</title>
        <authorList>
            <person name="Bian Y."/>
            <person name="Song C."/>
            <person name="Cheng K."/>
            <person name="Dong M."/>
            <person name="Wang F."/>
            <person name="Huang J."/>
            <person name="Sun D."/>
            <person name="Wang L."/>
            <person name="Ye M."/>
            <person name="Zou H."/>
        </authorList>
    </citation>
    <scope>IDENTIFICATION BY MASS SPECTROMETRY [LARGE SCALE ANALYSIS]</scope>
    <source>
        <tissue>Liver</tissue>
    </source>
</reference>
<reference key="14">
    <citation type="journal article" date="2017" name="Glycobiology">
        <title>Different properties of polysialic acids synthesized by the polysialyltransferases ST8SIA2 and ST8SIA4.</title>
        <authorList>
            <person name="Mori A."/>
            <person name="Hane M."/>
            <person name="Niimi Y."/>
            <person name="Kitajima K."/>
            <person name="Sato C."/>
        </authorList>
    </citation>
    <scope>POLYSIALILATION</scope>
</reference>
<reference key="15">
    <citation type="journal article" date="2020" name="Nat. Commun.">
        <title>Chemical proteomics tracks virus entry and uncovers NCAM1 as Zika virus receptor.</title>
        <authorList>
            <person name="Srivastava M."/>
            <person name="Zhang Y."/>
            <person name="Chen J."/>
            <person name="Sirohi D."/>
            <person name="Miller A."/>
            <person name="Zhang Y."/>
            <person name="Chen Z."/>
            <person name="Lu H."/>
            <person name="Xu J."/>
            <person name="Kuhn R.J."/>
            <person name="Andy Tao W."/>
        </authorList>
    </citation>
    <scope>FUNCTION (MICROBIAL INFECTION)</scope>
    <scope>INTERACTION WITH ZIKA VIRUS ENVELOPE PROTEIN E</scope>
</reference>
<sequence>MLQTKDLIWTLFFLGTAVSLQVDIVPSQGEISVGESKFFLCQVAGDAKDKDISWFSPNGEKLTPNQQRISVVWNDDSSSTLTIYNANIDDAGIYKCVVTGEDGSESEATVNVKIFQKLMFKNAPTPQEFREGEDAVIVCDVVSSLPPTIIWKHKGRDVILKKDVRFIVLSNNYLQIRGIKKTDEGTYRCEGRILARGEINFKDIQVIVNVPPTIQARQNIVNATANLGQSVTLVCDAEGFPEPTMSWTKDGEQIEQEEDDEKYIFSDDSSQLTIKKVDKNDEAEYICIAENKAGEQDATIHLKVFAKPKITYVENQTAMELEEQVTLTCEASGDPIPSITWRTSTRNISSEEKASWTRPEKQETLDGHMVVRSHARVSSLTLKSIQYTDAGEYICTASNTIGQDSQSMYLEVQYAPKLQGPVAVYTWEGNQVNITCEVFAYPSATISWFRDGQLLPSSNYSNIKIYNTPSASYLEVTPDSENDFGNYNCTAVNRIGQESLEFILVQADTPSSPSIDQVEPYSSTAQVQFDEPEATGGVPILKYKAEWRAVGEEVWHSKWYDAKEASMEGIVTIVGLKPETTYAVRLAALNGKGLGEISAASEFKTQPVQGEPSAPKLEGQMGEDGNSIKVNLIKQDDGGSPIRHYLVRYRALSSEWKPEIRLPSGSDHVMLKSLDWNAEYEVYVVAENQQGKSKAAHFVFRTSAQPTAIPANGSPTSGLSTGAIVGILIVIFVLLLVVVDITCYFLNKCGLFMCIAVNLCGKAGPGAKGKDMEEGKAAFSKDESKEPIVEVRTEEERTPNHDGGKHTEPNETTPLTEPEKGPVEAKPECQETETKPAPAEVKTVPNDATQTKENESKA</sequence>
<accession>P13591</accession>
<accession>A8K8T8</accession>
<accession>P13592</accession>
<accession>P13593</accession>
<accession>Q05C58</accession>
<accession>Q15829</accession>
<accession>Q16180</accession>
<accession>Q16209</accession>
<accession>Q59FL7</accession>
<accession>Q86X47</accession>
<accession>Q96CJ3</accession>